<name>PHIN_FUNX7</name>
<protein>
    <recommendedName>
        <fullName evidence="3">Phomoidride biosynthesis cluster protein N</fullName>
    </recommendedName>
</protein>
<organism>
    <name type="scientific">Fungal sp. (strain ATCC 74256)</name>
    <dbReference type="NCBI Taxonomy" id="1729595"/>
    <lineage>
        <taxon>Eukaryota</taxon>
        <taxon>Fungi</taxon>
    </lineage>
</organism>
<feature type="chain" id="PRO_0000458932" description="Phomoidride biosynthesis cluster protein N">
    <location>
        <begin position="1"/>
        <end position="219"/>
    </location>
</feature>
<proteinExistence type="evidence at protein level"/>
<gene>
    <name evidence="3" type="primary">phiN</name>
</gene>
<dbReference type="EMBL" id="LC086931">
    <property type="protein sequence ID" value="BBG28511.1"/>
    <property type="molecule type" value="Genomic_DNA"/>
</dbReference>
<dbReference type="SMR" id="A0A348HAY9"/>
<dbReference type="CDD" id="cd00866">
    <property type="entry name" value="PEBP_euk"/>
    <property type="match status" value="1"/>
</dbReference>
<dbReference type="Gene3D" id="3.90.280.10">
    <property type="entry name" value="PEBP-like"/>
    <property type="match status" value="1"/>
</dbReference>
<dbReference type="InterPro" id="IPR008914">
    <property type="entry name" value="PEBP"/>
</dbReference>
<dbReference type="InterPro" id="IPR036610">
    <property type="entry name" value="PEBP-like_sf"/>
</dbReference>
<dbReference type="InterPro" id="IPR035810">
    <property type="entry name" value="PEBP_euk"/>
</dbReference>
<dbReference type="Pfam" id="PF01161">
    <property type="entry name" value="PBP"/>
    <property type="match status" value="1"/>
</dbReference>
<dbReference type="SUPFAM" id="SSF49777">
    <property type="entry name" value="PEBP-like"/>
    <property type="match status" value="1"/>
</dbReference>
<accession>A0A348HAY9</accession>
<reference key="1">
    <citation type="journal article" date="2015" name="Org. Lett.">
        <title>Biosynthetic study on antihypercholesterolemic agent phomoidride: general biogenesis of fungal dimeric anhydrides.</title>
        <authorList>
            <person name="Fujii R."/>
            <person name="Matsu Y."/>
            <person name="Minami A."/>
            <person name="Nagamine S."/>
            <person name="Takeuchi I."/>
            <person name="Gomi K."/>
            <person name="Oikawa H."/>
        </authorList>
    </citation>
    <scope>NUCLEOTIDE SEQUENCE [GENOMIC DNA]</scope>
    <source>
        <strain>ATCC 74256</strain>
    </source>
</reference>
<reference key="2">
    <citation type="journal article" date="1997" name="J. Antibiot.">
        <title>CP-225,917 and CP-263,114, novel Ras farnesylation inhibitors from an unidentified fungus. I. Taxonomy, fermentation, isolation, and biochemical properties.</title>
        <authorList>
            <person name="Dabrah T.T."/>
            <person name="Harwood H.J. Jr."/>
            <person name="Huang L.H."/>
            <person name="Jankovich N.D."/>
            <person name="Kaneko T."/>
            <person name="Li J.C."/>
            <person name="Lindsey S."/>
            <person name="Moshier P.M."/>
            <person name="Subashi T.A."/>
            <person name="Therrien M."/>
            <person name="Watts P.C."/>
        </authorList>
    </citation>
    <scope>BIOTECHNOLOGY</scope>
</reference>
<reference key="3">
    <citation type="journal article" date="2022" name="J. Am. Chem. Soc.">
        <title>Elucidation of late-stage biosynthesis of phomoidride: proposal of cyclization mechanism affording characteristic nine-membered ring of fungal dimeric anhydride.</title>
        <authorList>
            <person name="Yamamoto S."/>
            <person name="Matsuyama T."/>
            <person name="Ozaki T."/>
            <person name="Takino J."/>
            <person name="Sato H."/>
            <person name="Uchiyama M."/>
            <person name="Minami A."/>
            <person name="Oikawa H."/>
        </authorList>
    </citation>
    <scope>FUNCTION</scope>
</reference>
<sequence length="219" mass="24740">MFSSLLDLRVHRVYHISTWFGQVRESYRKPPTSTLVNGFGNHVGPRTSERELTYGVFGEDGKLTKLCIGRYVEFAPRLDLKSLSSCSPSAYLAFMIDIDIIRDGRTVHLLHWYQPDLVLAHKTHELVQTCSDRKGALYGAPAPPGGSSHRYVELVFQQPLNFTFPESFEHYLEPTIPARLFFNITEFAAAAELGNPVAANYFTVLGTRTSTEEQQIIEL</sequence>
<evidence type="ECO:0000269" key="1">
    <source>
    </source>
</evidence>
<evidence type="ECO:0000269" key="2">
    <source>
    </source>
</evidence>
<evidence type="ECO:0000303" key="3">
    <source>
    </source>
</evidence>
<evidence type="ECO:0000305" key="4"/>
<evidence type="ECO:0000305" key="5">
    <source>
    </source>
</evidence>
<comment type="function">
    <text evidence="1 5">Phosphatidylethanolamine-binding protein; part of the gene cluster that mediates the biosynthesis of the antihypercholesterolemic agents phomoidrides which are dimeric anhydrides (PubMed:26558485). Within the pathway, phiN is not essential for dimerization and its function has still to be determined (Probable). The pathway begins with the highly reducing polyketide synthase phiA that catalyzes the formation of a C12-fatty acyl-ACP, starting from one acetate and 5 malonate units. The hydrolase phiM is involved in the release of the C12-fatty acyl chain from phiA. The alkylcitrate synthase (ACS) phiJ and the alkylcitrate dehydratase (ACDH) phiI then give rise to decarboxylated monomeric anhydrides by coupling the C12-fatty acyl chain with oxalacetic acid. The cyclase phiC is responsible for the dimerization of the monomeric anhydrides which leads to the production of prephomoidride that contains the characteristic bicyclo[4.3.1]deca-1,6-diene system of phomoidrides. Iterative oxidation catalyzed by the alpha-ketoglutarate-dependent dioxygenase phiK produced then phomoidride A. Finally, the methyltransferase phiE converts phomoidride A to phomoidride B via an acetalization reaction. The phosphatidylethanolamine-binding protein phiB and phiN are not essential for dimerization and their functions have still to be determined (Probable).</text>
</comment>
<comment type="biotechnology">
    <text evidence="2">Phomoidrides A and B (also known as CP-225,917 and CP-263,114) are potent inhibitors of Ras farnesyltransferase and squalene synthase (PubMed:9066758). CP-225,917 and CP-263,114 inhibit Ras farnesyl transferase from rat brain with IC(50) values of 6 uM and 20 uoM, respectively (PubMed:9066758). CP-225,917 inhibits squalene synthase with an IC(50) value of 43 uM and CP-263,114 with an IC(50) of 160 uM (PubMed:9066758).</text>
</comment>
<comment type="similarity">
    <text evidence="4">Belongs to the tstN family.</text>
</comment>